<organism>
    <name type="scientific">Helicobacter acinonychis (strain Sheeba)</name>
    <dbReference type="NCBI Taxonomy" id="382638"/>
    <lineage>
        <taxon>Bacteria</taxon>
        <taxon>Pseudomonadati</taxon>
        <taxon>Campylobacterota</taxon>
        <taxon>Epsilonproteobacteria</taxon>
        <taxon>Campylobacterales</taxon>
        <taxon>Helicobacteraceae</taxon>
        <taxon>Helicobacter</taxon>
    </lineage>
</organism>
<dbReference type="EMBL" id="AM260522">
    <property type="protein sequence ID" value="CAK00193.1"/>
    <property type="molecule type" value="Genomic_DNA"/>
</dbReference>
<dbReference type="RefSeq" id="WP_011578283.1">
    <property type="nucleotide sequence ID" value="NC_008229.1"/>
</dbReference>
<dbReference type="SMR" id="Q17VY3"/>
<dbReference type="STRING" id="382638.Hac_1469"/>
<dbReference type="GeneID" id="91961800"/>
<dbReference type="KEGG" id="hac:Hac_1469"/>
<dbReference type="eggNOG" id="COG0576">
    <property type="taxonomic scope" value="Bacteria"/>
</dbReference>
<dbReference type="HOGENOM" id="CLU_057217_6_3_7"/>
<dbReference type="Proteomes" id="UP000000775">
    <property type="component" value="Chromosome"/>
</dbReference>
<dbReference type="GO" id="GO:0005829">
    <property type="term" value="C:cytosol"/>
    <property type="evidence" value="ECO:0007669"/>
    <property type="project" value="TreeGrafter"/>
</dbReference>
<dbReference type="GO" id="GO:0000774">
    <property type="term" value="F:adenyl-nucleotide exchange factor activity"/>
    <property type="evidence" value="ECO:0007669"/>
    <property type="project" value="InterPro"/>
</dbReference>
<dbReference type="GO" id="GO:0042803">
    <property type="term" value="F:protein homodimerization activity"/>
    <property type="evidence" value="ECO:0007669"/>
    <property type="project" value="InterPro"/>
</dbReference>
<dbReference type="GO" id="GO:0051087">
    <property type="term" value="F:protein-folding chaperone binding"/>
    <property type="evidence" value="ECO:0007669"/>
    <property type="project" value="InterPro"/>
</dbReference>
<dbReference type="GO" id="GO:0051082">
    <property type="term" value="F:unfolded protein binding"/>
    <property type="evidence" value="ECO:0007669"/>
    <property type="project" value="TreeGrafter"/>
</dbReference>
<dbReference type="GO" id="GO:0006457">
    <property type="term" value="P:protein folding"/>
    <property type="evidence" value="ECO:0007669"/>
    <property type="project" value="InterPro"/>
</dbReference>
<dbReference type="CDD" id="cd00446">
    <property type="entry name" value="GrpE"/>
    <property type="match status" value="1"/>
</dbReference>
<dbReference type="FunFam" id="2.30.22.10:FF:000001">
    <property type="entry name" value="Protein GrpE"/>
    <property type="match status" value="1"/>
</dbReference>
<dbReference type="Gene3D" id="3.90.20.20">
    <property type="match status" value="1"/>
</dbReference>
<dbReference type="Gene3D" id="2.30.22.10">
    <property type="entry name" value="Head domain of nucleotide exchange factor GrpE"/>
    <property type="match status" value="1"/>
</dbReference>
<dbReference type="HAMAP" id="MF_01151">
    <property type="entry name" value="GrpE"/>
    <property type="match status" value="1"/>
</dbReference>
<dbReference type="InterPro" id="IPR000740">
    <property type="entry name" value="GrpE"/>
</dbReference>
<dbReference type="InterPro" id="IPR013805">
    <property type="entry name" value="GrpE_coiled_coil"/>
</dbReference>
<dbReference type="InterPro" id="IPR009012">
    <property type="entry name" value="GrpE_head"/>
</dbReference>
<dbReference type="NCBIfam" id="NF010738">
    <property type="entry name" value="PRK14140.1"/>
    <property type="match status" value="1"/>
</dbReference>
<dbReference type="NCBIfam" id="NF010747">
    <property type="entry name" value="PRK14149.1"/>
    <property type="match status" value="1"/>
</dbReference>
<dbReference type="PANTHER" id="PTHR21237">
    <property type="entry name" value="GRPE PROTEIN"/>
    <property type="match status" value="1"/>
</dbReference>
<dbReference type="PANTHER" id="PTHR21237:SF23">
    <property type="entry name" value="GRPE PROTEIN HOMOLOG, MITOCHONDRIAL"/>
    <property type="match status" value="1"/>
</dbReference>
<dbReference type="Pfam" id="PF01025">
    <property type="entry name" value="GrpE"/>
    <property type="match status" value="1"/>
</dbReference>
<dbReference type="PRINTS" id="PR00773">
    <property type="entry name" value="GRPEPROTEIN"/>
</dbReference>
<dbReference type="SUPFAM" id="SSF58014">
    <property type="entry name" value="Coiled-coil domain of nucleotide exchange factor GrpE"/>
    <property type="match status" value="1"/>
</dbReference>
<dbReference type="SUPFAM" id="SSF51064">
    <property type="entry name" value="Head domain of nucleotide exchange factor GrpE"/>
    <property type="match status" value="1"/>
</dbReference>
<dbReference type="PROSITE" id="PS01071">
    <property type="entry name" value="GRPE"/>
    <property type="match status" value="1"/>
</dbReference>
<proteinExistence type="inferred from homology"/>
<evidence type="ECO:0000255" key="1">
    <source>
        <dbReference type="HAMAP-Rule" id="MF_01151"/>
    </source>
</evidence>
<evidence type="ECO:0000256" key="2">
    <source>
        <dbReference type="SAM" id="MobiDB-lite"/>
    </source>
</evidence>
<gene>
    <name evidence="1" type="primary">grpE</name>
    <name type="ordered locus">Hac_1469</name>
</gene>
<name>GRPE_HELAH</name>
<feature type="chain" id="PRO_1000053589" description="Protein GrpE">
    <location>
        <begin position="1"/>
        <end position="186"/>
    </location>
</feature>
<feature type="region of interest" description="Disordered" evidence="2">
    <location>
        <begin position="1"/>
        <end position="32"/>
    </location>
</feature>
<feature type="compositionally biased region" description="Basic and acidic residues" evidence="2">
    <location>
        <begin position="1"/>
        <end position="17"/>
    </location>
</feature>
<accession>Q17VY3</accession>
<keyword id="KW-0143">Chaperone</keyword>
<keyword id="KW-0963">Cytoplasm</keyword>
<keyword id="KW-0346">Stress response</keyword>
<protein>
    <recommendedName>
        <fullName evidence="1">Protein GrpE</fullName>
    </recommendedName>
    <alternativeName>
        <fullName evidence="1">HSP-70 cofactor</fullName>
    </alternativeName>
</protein>
<reference key="1">
    <citation type="journal article" date="2006" name="PLoS Genet.">
        <title>Who ate whom? Adaptive Helicobacter genomic changes that accompanied a host jump from early humans to large felines.</title>
        <authorList>
            <person name="Eppinger M."/>
            <person name="Baar C."/>
            <person name="Linz B."/>
            <person name="Raddatz G."/>
            <person name="Lanz C."/>
            <person name="Keller H."/>
            <person name="Morelli G."/>
            <person name="Gressmann H."/>
            <person name="Achtman M."/>
            <person name="Schuster S.C."/>
        </authorList>
    </citation>
    <scope>NUCLEOTIDE SEQUENCE [LARGE SCALE GENOMIC DNA]</scope>
    <source>
        <strain>Sheeba</strain>
    </source>
</reference>
<sequence length="186" mass="21427">MKDEHNQEHDLSQKELESCENSCTCEGKKQEASEKECEIKEDFELKYQEMHEKYLRVHADFENVKKRLERDKSMALEYAYEKIALDLLPVIDALLGAHKSASGDDKESALTKGLELTMEKLHEVLARHGIEGIECLEEFDPNFHNAIMQVKSEEKENGKIVQVLQQGYKYKGRVLRPAMVSIAKND</sequence>
<comment type="function">
    <text evidence="1">Participates actively in the response to hyperosmotic and heat shock by preventing the aggregation of stress-denatured proteins, in association with DnaK and GrpE. It is the nucleotide exchange factor for DnaK and may function as a thermosensor. Unfolded proteins bind initially to DnaJ; upon interaction with the DnaJ-bound protein, DnaK hydrolyzes its bound ATP, resulting in the formation of a stable complex. GrpE releases ADP from DnaK; ATP binding to DnaK triggers the release of the substrate protein, thus completing the reaction cycle. Several rounds of ATP-dependent interactions between DnaJ, DnaK and GrpE are required for fully efficient folding.</text>
</comment>
<comment type="subunit">
    <text evidence="1">Homodimer.</text>
</comment>
<comment type="subcellular location">
    <subcellularLocation>
        <location evidence="1">Cytoplasm</location>
    </subcellularLocation>
</comment>
<comment type="similarity">
    <text evidence="1">Belongs to the GrpE family.</text>
</comment>